<dbReference type="EC" id="3.6.5.n1" evidence="1"/>
<dbReference type="EMBL" id="CP000148">
    <property type="protein sequence ID" value="ABB31997.2"/>
    <property type="molecule type" value="Genomic_DNA"/>
</dbReference>
<dbReference type="RefSeq" id="WP_004513337.1">
    <property type="nucleotide sequence ID" value="NC_007517.1"/>
</dbReference>
<dbReference type="SMR" id="Q39US7"/>
<dbReference type="STRING" id="269799.Gmet_1766"/>
<dbReference type="KEGG" id="gme:Gmet_1766"/>
<dbReference type="eggNOG" id="COG0481">
    <property type="taxonomic scope" value="Bacteria"/>
</dbReference>
<dbReference type="HOGENOM" id="CLU_009995_3_3_7"/>
<dbReference type="Proteomes" id="UP000007073">
    <property type="component" value="Chromosome"/>
</dbReference>
<dbReference type="GO" id="GO:0005886">
    <property type="term" value="C:plasma membrane"/>
    <property type="evidence" value="ECO:0007669"/>
    <property type="project" value="UniProtKB-SubCell"/>
</dbReference>
<dbReference type="GO" id="GO:0005525">
    <property type="term" value="F:GTP binding"/>
    <property type="evidence" value="ECO:0007669"/>
    <property type="project" value="UniProtKB-UniRule"/>
</dbReference>
<dbReference type="GO" id="GO:0003924">
    <property type="term" value="F:GTPase activity"/>
    <property type="evidence" value="ECO:0007669"/>
    <property type="project" value="UniProtKB-UniRule"/>
</dbReference>
<dbReference type="GO" id="GO:0043022">
    <property type="term" value="F:ribosome binding"/>
    <property type="evidence" value="ECO:0007669"/>
    <property type="project" value="UniProtKB-UniRule"/>
</dbReference>
<dbReference type="GO" id="GO:0003746">
    <property type="term" value="F:translation elongation factor activity"/>
    <property type="evidence" value="ECO:0007669"/>
    <property type="project" value="UniProtKB-UniRule"/>
</dbReference>
<dbReference type="GO" id="GO:0045727">
    <property type="term" value="P:positive regulation of translation"/>
    <property type="evidence" value="ECO:0007669"/>
    <property type="project" value="UniProtKB-UniRule"/>
</dbReference>
<dbReference type="CDD" id="cd03699">
    <property type="entry name" value="EF4_II"/>
    <property type="match status" value="1"/>
</dbReference>
<dbReference type="CDD" id="cd16260">
    <property type="entry name" value="EF4_III"/>
    <property type="match status" value="1"/>
</dbReference>
<dbReference type="CDD" id="cd01890">
    <property type="entry name" value="LepA"/>
    <property type="match status" value="1"/>
</dbReference>
<dbReference type="CDD" id="cd03709">
    <property type="entry name" value="lepA_C"/>
    <property type="match status" value="1"/>
</dbReference>
<dbReference type="FunFam" id="3.40.50.300:FF:000078">
    <property type="entry name" value="Elongation factor 4"/>
    <property type="match status" value="1"/>
</dbReference>
<dbReference type="FunFam" id="2.40.30.10:FF:000015">
    <property type="entry name" value="Translation factor GUF1, mitochondrial"/>
    <property type="match status" value="1"/>
</dbReference>
<dbReference type="FunFam" id="3.30.70.240:FF:000007">
    <property type="entry name" value="Translation factor GUF1, mitochondrial"/>
    <property type="match status" value="1"/>
</dbReference>
<dbReference type="FunFam" id="3.30.70.2570:FF:000001">
    <property type="entry name" value="Translation factor GUF1, mitochondrial"/>
    <property type="match status" value="1"/>
</dbReference>
<dbReference type="FunFam" id="3.30.70.870:FF:000004">
    <property type="entry name" value="Translation factor GUF1, mitochondrial"/>
    <property type="match status" value="1"/>
</dbReference>
<dbReference type="Gene3D" id="3.30.70.240">
    <property type="match status" value="1"/>
</dbReference>
<dbReference type="Gene3D" id="3.30.70.2570">
    <property type="entry name" value="Elongation factor 4, C-terminal domain"/>
    <property type="match status" value="1"/>
</dbReference>
<dbReference type="Gene3D" id="3.30.70.870">
    <property type="entry name" value="Elongation Factor G (Translational Gtpase), domain 3"/>
    <property type="match status" value="1"/>
</dbReference>
<dbReference type="Gene3D" id="3.40.50.300">
    <property type="entry name" value="P-loop containing nucleotide triphosphate hydrolases"/>
    <property type="match status" value="1"/>
</dbReference>
<dbReference type="Gene3D" id="2.40.30.10">
    <property type="entry name" value="Translation factors"/>
    <property type="match status" value="1"/>
</dbReference>
<dbReference type="HAMAP" id="MF_00071">
    <property type="entry name" value="LepA"/>
    <property type="match status" value="1"/>
</dbReference>
<dbReference type="InterPro" id="IPR006297">
    <property type="entry name" value="EF-4"/>
</dbReference>
<dbReference type="InterPro" id="IPR035647">
    <property type="entry name" value="EFG_III/V"/>
</dbReference>
<dbReference type="InterPro" id="IPR000640">
    <property type="entry name" value="EFG_V-like"/>
</dbReference>
<dbReference type="InterPro" id="IPR004161">
    <property type="entry name" value="EFTu-like_2"/>
</dbReference>
<dbReference type="InterPro" id="IPR031157">
    <property type="entry name" value="G_TR_CS"/>
</dbReference>
<dbReference type="InterPro" id="IPR038363">
    <property type="entry name" value="LepA_C_sf"/>
</dbReference>
<dbReference type="InterPro" id="IPR013842">
    <property type="entry name" value="LepA_CTD"/>
</dbReference>
<dbReference type="InterPro" id="IPR035654">
    <property type="entry name" value="LepA_IV"/>
</dbReference>
<dbReference type="InterPro" id="IPR027417">
    <property type="entry name" value="P-loop_NTPase"/>
</dbReference>
<dbReference type="InterPro" id="IPR005225">
    <property type="entry name" value="Small_GTP-bd"/>
</dbReference>
<dbReference type="InterPro" id="IPR000795">
    <property type="entry name" value="T_Tr_GTP-bd_dom"/>
</dbReference>
<dbReference type="NCBIfam" id="TIGR01393">
    <property type="entry name" value="lepA"/>
    <property type="match status" value="1"/>
</dbReference>
<dbReference type="NCBIfam" id="TIGR00231">
    <property type="entry name" value="small_GTP"/>
    <property type="match status" value="1"/>
</dbReference>
<dbReference type="PANTHER" id="PTHR43512:SF4">
    <property type="entry name" value="TRANSLATION FACTOR GUF1 HOMOLOG, CHLOROPLASTIC"/>
    <property type="match status" value="1"/>
</dbReference>
<dbReference type="PANTHER" id="PTHR43512">
    <property type="entry name" value="TRANSLATION FACTOR GUF1-RELATED"/>
    <property type="match status" value="1"/>
</dbReference>
<dbReference type="Pfam" id="PF00679">
    <property type="entry name" value="EFG_C"/>
    <property type="match status" value="1"/>
</dbReference>
<dbReference type="Pfam" id="PF00009">
    <property type="entry name" value="GTP_EFTU"/>
    <property type="match status" value="1"/>
</dbReference>
<dbReference type="Pfam" id="PF03144">
    <property type="entry name" value="GTP_EFTU_D2"/>
    <property type="match status" value="1"/>
</dbReference>
<dbReference type="Pfam" id="PF06421">
    <property type="entry name" value="LepA_C"/>
    <property type="match status" value="1"/>
</dbReference>
<dbReference type="PRINTS" id="PR00315">
    <property type="entry name" value="ELONGATNFCT"/>
</dbReference>
<dbReference type="SUPFAM" id="SSF54980">
    <property type="entry name" value="EF-G C-terminal domain-like"/>
    <property type="match status" value="2"/>
</dbReference>
<dbReference type="SUPFAM" id="SSF52540">
    <property type="entry name" value="P-loop containing nucleoside triphosphate hydrolases"/>
    <property type="match status" value="1"/>
</dbReference>
<dbReference type="PROSITE" id="PS00301">
    <property type="entry name" value="G_TR_1"/>
    <property type="match status" value="1"/>
</dbReference>
<dbReference type="PROSITE" id="PS51722">
    <property type="entry name" value="G_TR_2"/>
    <property type="match status" value="1"/>
</dbReference>
<evidence type="ECO:0000255" key="1">
    <source>
        <dbReference type="HAMAP-Rule" id="MF_00071"/>
    </source>
</evidence>
<comment type="function">
    <text evidence="1">Required for accurate and efficient protein synthesis under certain stress conditions. May act as a fidelity factor of the translation reaction, by catalyzing a one-codon backward translocation of tRNAs on improperly translocated ribosomes. Back-translocation proceeds from a post-translocation (POST) complex to a pre-translocation (PRE) complex, thus giving elongation factor G a second chance to translocate the tRNAs correctly. Binds to ribosomes in a GTP-dependent manner.</text>
</comment>
<comment type="catalytic activity">
    <reaction evidence="1">
        <text>GTP + H2O = GDP + phosphate + H(+)</text>
        <dbReference type="Rhea" id="RHEA:19669"/>
        <dbReference type="ChEBI" id="CHEBI:15377"/>
        <dbReference type="ChEBI" id="CHEBI:15378"/>
        <dbReference type="ChEBI" id="CHEBI:37565"/>
        <dbReference type="ChEBI" id="CHEBI:43474"/>
        <dbReference type="ChEBI" id="CHEBI:58189"/>
        <dbReference type="EC" id="3.6.5.n1"/>
    </reaction>
</comment>
<comment type="subcellular location">
    <subcellularLocation>
        <location evidence="1">Cell inner membrane</location>
        <topology evidence="1">Peripheral membrane protein</topology>
        <orientation evidence="1">Cytoplasmic side</orientation>
    </subcellularLocation>
</comment>
<comment type="similarity">
    <text evidence="1">Belongs to the TRAFAC class translation factor GTPase superfamily. Classic translation factor GTPase family. LepA subfamily.</text>
</comment>
<accession>Q39US7</accession>
<name>LEPA_GEOMG</name>
<feature type="chain" id="PRO_0000265661" description="Elongation factor 4">
    <location>
        <begin position="1"/>
        <end position="599"/>
    </location>
</feature>
<feature type="domain" description="tr-type G">
    <location>
        <begin position="4"/>
        <end position="186"/>
    </location>
</feature>
<feature type="binding site" evidence="1">
    <location>
        <begin position="16"/>
        <end position="21"/>
    </location>
    <ligand>
        <name>GTP</name>
        <dbReference type="ChEBI" id="CHEBI:37565"/>
    </ligand>
</feature>
<feature type="binding site" evidence="1">
    <location>
        <begin position="133"/>
        <end position="136"/>
    </location>
    <ligand>
        <name>GTP</name>
        <dbReference type="ChEBI" id="CHEBI:37565"/>
    </ligand>
</feature>
<proteinExistence type="inferred from homology"/>
<keyword id="KW-0997">Cell inner membrane</keyword>
<keyword id="KW-1003">Cell membrane</keyword>
<keyword id="KW-0342">GTP-binding</keyword>
<keyword id="KW-0378">Hydrolase</keyword>
<keyword id="KW-0472">Membrane</keyword>
<keyword id="KW-0547">Nucleotide-binding</keyword>
<keyword id="KW-0648">Protein biosynthesis</keyword>
<keyword id="KW-1185">Reference proteome</keyword>
<sequence length="599" mass="67272">MKIENIRNFSIIAHIDHGKSTLADRLLEYTGALSERERQDQFLDKMDLERERGITIKAQTVRLNYRADDGKDYVLNLIDTPGHVDFTYEVSRSLAACEGGLLVVDASQGVEAQTLANVYLAIDNNLEVFPVLNKIDLPAAEPERVKHEIEEIIGLDAHDAVLASAKEGIGTREILEEIVKKIPPPEGDPAAPLKALLFDSWYDQYQGVIILARLIDGILKKGDKIQLVSTGRSYEALKVGVFAPVMREVPQLSAGEVGFVIAGIKDVADAKIGDTVTHTLKPCTTPLGGFKEVKPMVFSGLYPIDTSQYEQLRDALAKLKLNDSSFSYEPETSLALGFGFRCGFLGLLHMEIIQERLEREFNLDLITTAPTVVYRVHRIKGDMISIESANQLPPTQEIDYVEEPFILASIHTPNEFVGGILALCEEKRGVQREIKYLTPTRVMIIYELPLNEVVLDFYDRLKSITKGYASLDYEHLDYRRSELVRMNIMINGEVVDALSLIIHRDKAYYRGRDLVSKMKELIPRQMFEVAIQAAIGAKVIARETVKALRKDVLAKCYGGDITRKRKLLEKQKEGKKRMKNVGNVELPQEAFLAILKVEE</sequence>
<organism>
    <name type="scientific">Geobacter metallireducens (strain ATCC 53774 / DSM 7210 / GS-15)</name>
    <dbReference type="NCBI Taxonomy" id="269799"/>
    <lineage>
        <taxon>Bacteria</taxon>
        <taxon>Pseudomonadati</taxon>
        <taxon>Thermodesulfobacteriota</taxon>
        <taxon>Desulfuromonadia</taxon>
        <taxon>Geobacterales</taxon>
        <taxon>Geobacteraceae</taxon>
        <taxon>Geobacter</taxon>
    </lineage>
</organism>
<reference key="1">
    <citation type="journal article" date="2009" name="BMC Microbiol.">
        <title>The genome sequence of Geobacter metallireducens: features of metabolism, physiology and regulation common and dissimilar to Geobacter sulfurreducens.</title>
        <authorList>
            <person name="Aklujkar M."/>
            <person name="Krushkal J."/>
            <person name="DiBartolo G."/>
            <person name="Lapidus A."/>
            <person name="Land M.L."/>
            <person name="Lovley D.R."/>
        </authorList>
    </citation>
    <scope>NUCLEOTIDE SEQUENCE [LARGE SCALE GENOMIC DNA]</scope>
    <source>
        <strain>ATCC 53774 / DSM 7210 / GS-15</strain>
    </source>
</reference>
<protein>
    <recommendedName>
        <fullName evidence="1">Elongation factor 4</fullName>
        <shortName evidence="1">EF-4</shortName>
        <ecNumber evidence="1">3.6.5.n1</ecNumber>
    </recommendedName>
    <alternativeName>
        <fullName evidence="1">Ribosomal back-translocase LepA</fullName>
    </alternativeName>
</protein>
<gene>
    <name evidence="1" type="primary">lepA</name>
    <name type="ordered locus">Gmet_1766</name>
</gene>